<proteinExistence type="inferred from homology"/>
<organism>
    <name type="scientific">Rhodopseudomonas palustris (strain BisB18)</name>
    <dbReference type="NCBI Taxonomy" id="316056"/>
    <lineage>
        <taxon>Bacteria</taxon>
        <taxon>Pseudomonadati</taxon>
        <taxon>Pseudomonadota</taxon>
        <taxon>Alphaproteobacteria</taxon>
        <taxon>Hyphomicrobiales</taxon>
        <taxon>Nitrobacteraceae</taxon>
        <taxon>Rhodopseudomonas</taxon>
    </lineage>
</organism>
<comment type="function">
    <text evidence="1">This is one of the proteins that bind and probably mediate the attachment of the 5S RNA into the large ribosomal subunit, where it forms part of the central protuberance. In the 70S ribosome it contacts protein S13 of the 30S subunit (bridge B1b), connecting the 2 subunits; this bridge is implicated in subunit movement. Contacts the P site tRNA; the 5S rRNA and some of its associated proteins might help stabilize positioning of ribosome-bound tRNAs.</text>
</comment>
<comment type="subunit">
    <text evidence="1">Part of the 50S ribosomal subunit; part of the 5S rRNA/L5/L18/L25 subcomplex. Contacts the 5S rRNA and the P site tRNA. Forms a bridge to the 30S subunit in the 70S ribosome.</text>
</comment>
<comment type="similarity">
    <text evidence="1">Belongs to the universal ribosomal protein uL5 family.</text>
</comment>
<keyword id="KW-0687">Ribonucleoprotein</keyword>
<keyword id="KW-0689">Ribosomal protein</keyword>
<keyword id="KW-0694">RNA-binding</keyword>
<keyword id="KW-0699">rRNA-binding</keyword>
<keyword id="KW-0820">tRNA-binding</keyword>
<protein>
    <recommendedName>
        <fullName evidence="1">Large ribosomal subunit protein uL5</fullName>
    </recommendedName>
    <alternativeName>
        <fullName evidence="2">50S ribosomal protein L5</fullName>
    </alternativeName>
</protein>
<accession>Q211G0</accession>
<evidence type="ECO:0000255" key="1">
    <source>
        <dbReference type="HAMAP-Rule" id="MF_01333"/>
    </source>
</evidence>
<evidence type="ECO:0000305" key="2"/>
<feature type="chain" id="PRO_0000243052" description="Large ribosomal subunit protein uL5">
    <location>
        <begin position="1"/>
        <end position="185"/>
    </location>
</feature>
<sequence>MAETAYVPRLREQFDREIRGKLTEQFGYANVMQVPRLDKVVLNMGIGEAVNDRKKAETAAADLALIAGQKPIVTYSRVAIATFKLRENQPIGAKVTLRKAKMYEFIDRLINVALPRVRDFRGLNPKSFDGRGNYSLGIKEHIIFPEIDFDKMGETWGMDVTVCTTARTDDEARALLTAFNFPFRQ</sequence>
<gene>
    <name evidence="1" type="primary">rplE</name>
    <name type="ordered locus">RPC_3436</name>
</gene>
<name>RL5_RHOPB</name>
<reference key="1">
    <citation type="submission" date="2006-03" db="EMBL/GenBank/DDBJ databases">
        <title>Complete sequence of Rhodopseudomonas palustris BisB18.</title>
        <authorList>
            <consortium name="US DOE Joint Genome Institute"/>
            <person name="Copeland A."/>
            <person name="Lucas S."/>
            <person name="Lapidus A."/>
            <person name="Barry K."/>
            <person name="Detter J.C."/>
            <person name="Glavina del Rio T."/>
            <person name="Hammon N."/>
            <person name="Israni S."/>
            <person name="Dalin E."/>
            <person name="Tice H."/>
            <person name="Pitluck S."/>
            <person name="Chain P."/>
            <person name="Malfatti S."/>
            <person name="Shin M."/>
            <person name="Vergez L."/>
            <person name="Schmutz J."/>
            <person name="Larimer F."/>
            <person name="Land M."/>
            <person name="Hauser L."/>
            <person name="Pelletier D.A."/>
            <person name="Kyrpides N."/>
            <person name="Anderson I."/>
            <person name="Oda Y."/>
            <person name="Harwood C.S."/>
            <person name="Richardson P."/>
        </authorList>
    </citation>
    <scope>NUCLEOTIDE SEQUENCE [LARGE SCALE GENOMIC DNA]</scope>
    <source>
        <strain>BisB18</strain>
    </source>
</reference>
<dbReference type="EMBL" id="CP000301">
    <property type="protein sequence ID" value="ABD88976.1"/>
    <property type="molecule type" value="Genomic_DNA"/>
</dbReference>
<dbReference type="SMR" id="Q211G0"/>
<dbReference type="STRING" id="316056.RPC_3436"/>
<dbReference type="KEGG" id="rpc:RPC_3436"/>
<dbReference type="eggNOG" id="COG0094">
    <property type="taxonomic scope" value="Bacteria"/>
</dbReference>
<dbReference type="HOGENOM" id="CLU_061015_2_1_5"/>
<dbReference type="OrthoDB" id="9806626at2"/>
<dbReference type="GO" id="GO:1990904">
    <property type="term" value="C:ribonucleoprotein complex"/>
    <property type="evidence" value="ECO:0007669"/>
    <property type="project" value="UniProtKB-KW"/>
</dbReference>
<dbReference type="GO" id="GO:0005840">
    <property type="term" value="C:ribosome"/>
    <property type="evidence" value="ECO:0007669"/>
    <property type="project" value="UniProtKB-KW"/>
</dbReference>
<dbReference type="GO" id="GO:0019843">
    <property type="term" value="F:rRNA binding"/>
    <property type="evidence" value="ECO:0007669"/>
    <property type="project" value="UniProtKB-UniRule"/>
</dbReference>
<dbReference type="GO" id="GO:0003735">
    <property type="term" value="F:structural constituent of ribosome"/>
    <property type="evidence" value="ECO:0007669"/>
    <property type="project" value="InterPro"/>
</dbReference>
<dbReference type="GO" id="GO:0000049">
    <property type="term" value="F:tRNA binding"/>
    <property type="evidence" value="ECO:0007669"/>
    <property type="project" value="UniProtKB-UniRule"/>
</dbReference>
<dbReference type="GO" id="GO:0006412">
    <property type="term" value="P:translation"/>
    <property type="evidence" value="ECO:0007669"/>
    <property type="project" value="UniProtKB-UniRule"/>
</dbReference>
<dbReference type="FunFam" id="3.30.1440.10:FF:000001">
    <property type="entry name" value="50S ribosomal protein L5"/>
    <property type="match status" value="1"/>
</dbReference>
<dbReference type="Gene3D" id="3.30.1440.10">
    <property type="match status" value="1"/>
</dbReference>
<dbReference type="HAMAP" id="MF_01333_B">
    <property type="entry name" value="Ribosomal_uL5_B"/>
    <property type="match status" value="1"/>
</dbReference>
<dbReference type="InterPro" id="IPR002132">
    <property type="entry name" value="Ribosomal_uL5"/>
</dbReference>
<dbReference type="InterPro" id="IPR020930">
    <property type="entry name" value="Ribosomal_uL5_bac-type"/>
</dbReference>
<dbReference type="InterPro" id="IPR031309">
    <property type="entry name" value="Ribosomal_uL5_C"/>
</dbReference>
<dbReference type="InterPro" id="IPR020929">
    <property type="entry name" value="Ribosomal_uL5_CS"/>
</dbReference>
<dbReference type="InterPro" id="IPR022803">
    <property type="entry name" value="Ribosomal_uL5_dom_sf"/>
</dbReference>
<dbReference type="InterPro" id="IPR031310">
    <property type="entry name" value="Ribosomal_uL5_N"/>
</dbReference>
<dbReference type="NCBIfam" id="NF000585">
    <property type="entry name" value="PRK00010.1"/>
    <property type="match status" value="1"/>
</dbReference>
<dbReference type="PANTHER" id="PTHR11994">
    <property type="entry name" value="60S RIBOSOMAL PROTEIN L11-RELATED"/>
    <property type="match status" value="1"/>
</dbReference>
<dbReference type="Pfam" id="PF00281">
    <property type="entry name" value="Ribosomal_L5"/>
    <property type="match status" value="1"/>
</dbReference>
<dbReference type="Pfam" id="PF00673">
    <property type="entry name" value="Ribosomal_L5_C"/>
    <property type="match status" value="1"/>
</dbReference>
<dbReference type="PIRSF" id="PIRSF002161">
    <property type="entry name" value="Ribosomal_L5"/>
    <property type="match status" value="1"/>
</dbReference>
<dbReference type="SUPFAM" id="SSF55282">
    <property type="entry name" value="RL5-like"/>
    <property type="match status" value="1"/>
</dbReference>
<dbReference type="PROSITE" id="PS00358">
    <property type="entry name" value="RIBOSOMAL_L5"/>
    <property type="match status" value="1"/>
</dbReference>